<gene>
    <name type="primary">hemB</name>
    <name type="ordered locus">CT1431</name>
</gene>
<sequence>MSQLDLLNIVHRPRRLRRTAALRNLVQENTLTVNDLVFPLFVMPGTNAVEEVPSMPGSFRFTIDRAVEECKELYDLGIQAIDLFGIPEKKTEDGSEAYNDNGILQQAIRAIKKAVPELCIMTDVALDPFTPFGHDGLVRDGIILNDETVEVLQKMAVSHAEAGADFVSPSDMMDGRIGAIREALDESDHSDVGILSYAAKYASSFYGPFRDALHSAPQFGDKSTYQMNPANTDEAMKEVELDIIEGADIVMVKPGLAYLDIVWRTKERFDVPVAIYHVSGEYAMVKAAAANGWIDEERVMMESLLCMKRAGADIIFTYYAKEAAKKLR</sequence>
<accession>Q8KCJ0</accession>
<evidence type="ECO:0000250" key="1"/>
<evidence type="ECO:0000305" key="2"/>
<feature type="chain" id="PRO_0000140497" description="Delta-aminolevulinic acid dehydratase">
    <location>
        <begin position="1"/>
        <end position="328"/>
    </location>
</feature>
<feature type="active site" description="Schiff-base intermediate with substrate" evidence="1">
    <location>
        <position position="200"/>
    </location>
</feature>
<feature type="active site" description="Schiff-base intermediate with substrate" evidence="1">
    <location>
        <position position="253"/>
    </location>
</feature>
<feature type="binding site" evidence="1">
    <location>
        <position position="210"/>
    </location>
    <ligand>
        <name>5-aminolevulinate</name>
        <dbReference type="ChEBI" id="CHEBI:356416"/>
        <label>1</label>
    </ligand>
</feature>
<feature type="binding site" evidence="1">
    <location>
        <position position="222"/>
    </location>
    <ligand>
        <name>5-aminolevulinate</name>
        <dbReference type="ChEBI" id="CHEBI:356416"/>
        <label>1</label>
    </ligand>
</feature>
<feature type="binding site" evidence="1">
    <location>
        <position position="238"/>
    </location>
    <ligand>
        <name>Mg(2+)</name>
        <dbReference type="ChEBI" id="CHEBI:18420"/>
    </ligand>
</feature>
<feature type="binding site" evidence="1">
    <location>
        <position position="279"/>
    </location>
    <ligand>
        <name>5-aminolevulinate</name>
        <dbReference type="ChEBI" id="CHEBI:356416"/>
        <label>2</label>
    </ligand>
</feature>
<feature type="binding site" evidence="1">
    <location>
        <position position="318"/>
    </location>
    <ligand>
        <name>5-aminolevulinate</name>
        <dbReference type="ChEBI" id="CHEBI:356416"/>
        <label>2</label>
    </ligand>
</feature>
<name>HEM2_CHLTE</name>
<keyword id="KW-0350">Heme biosynthesis</keyword>
<keyword id="KW-0456">Lyase</keyword>
<keyword id="KW-0460">Magnesium</keyword>
<keyword id="KW-0479">Metal-binding</keyword>
<keyword id="KW-0627">Porphyrin biosynthesis</keyword>
<keyword id="KW-1185">Reference proteome</keyword>
<comment type="function">
    <text evidence="1">Catalyzes an early step in the biosynthesis of tetrapyrroles. Binds two molecules of 5-aminolevulinate per subunit, each at a distinct site, and catalyzes their condensation to form porphobilinogen (By similarity).</text>
</comment>
<comment type="catalytic activity">
    <reaction>
        <text>2 5-aminolevulinate = porphobilinogen + 2 H2O + H(+)</text>
        <dbReference type="Rhea" id="RHEA:24064"/>
        <dbReference type="ChEBI" id="CHEBI:15377"/>
        <dbReference type="ChEBI" id="CHEBI:15378"/>
        <dbReference type="ChEBI" id="CHEBI:58126"/>
        <dbReference type="ChEBI" id="CHEBI:356416"/>
        <dbReference type="EC" id="4.2.1.24"/>
    </reaction>
</comment>
<comment type="activity regulation">
    <text>Stimulated by magnesium, inhibited by zinc.</text>
</comment>
<comment type="pathway">
    <text>Porphyrin-containing compound metabolism; protoporphyrin-IX biosynthesis; coproporphyrinogen-III from 5-aminolevulinate: step 1/4.</text>
</comment>
<comment type="subunit">
    <text evidence="1">Homooctamer.</text>
</comment>
<comment type="miscellaneous">
    <text>Does not seem to have a metal requirement for activity.</text>
</comment>
<comment type="similarity">
    <text evidence="2">Belongs to the ALAD family.</text>
</comment>
<organism>
    <name type="scientific">Chlorobaculum tepidum (strain ATCC 49652 / DSM 12025 / NBRC 103806 / TLS)</name>
    <name type="common">Chlorobium tepidum</name>
    <dbReference type="NCBI Taxonomy" id="194439"/>
    <lineage>
        <taxon>Bacteria</taxon>
        <taxon>Pseudomonadati</taxon>
        <taxon>Chlorobiota</taxon>
        <taxon>Chlorobiia</taxon>
        <taxon>Chlorobiales</taxon>
        <taxon>Chlorobiaceae</taxon>
        <taxon>Chlorobaculum</taxon>
    </lineage>
</organism>
<protein>
    <recommendedName>
        <fullName>Delta-aminolevulinic acid dehydratase</fullName>
        <shortName>ALAD</shortName>
        <shortName>ALADH</shortName>
        <ecNumber>4.2.1.24</ecNumber>
    </recommendedName>
    <alternativeName>
        <fullName>Porphobilinogen synthase</fullName>
    </alternativeName>
</protein>
<proteinExistence type="inferred from homology"/>
<reference key="1">
    <citation type="journal article" date="2002" name="Proc. Natl. Acad. Sci. U.S.A.">
        <title>The complete genome sequence of Chlorobium tepidum TLS, a photosynthetic, anaerobic, green-sulfur bacterium.</title>
        <authorList>
            <person name="Eisen J.A."/>
            <person name="Nelson K.E."/>
            <person name="Paulsen I.T."/>
            <person name="Heidelberg J.F."/>
            <person name="Wu M."/>
            <person name="Dodson R.J."/>
            <person name="DeBoy R.T."/>
            <person name="Gwinn M.L."/>
            <person name="Nelson W.C."/>
            <person name="Haft D.H."/>
            <person name="Hickey E.K."/>
            <person name="Peterson J.D."/>
            <person name="Durkin A.S."/>
            <person name="Kolonay J.F."/>
            <person name="Yang F."/>
            <person name="Holt I.E."/>
            <person name="Umayam L.A."/>
            <person name="Mason T.M."/>
            <person name="Brenner M."/>
            <person name="Shea T.P."/>
            <person name="Parksey D.S."/>
            <person name="Nierman W.C."/>
            <person name="Feldblyum T.V."/>
            <person name="Hansen C.L."/>
            <person name="Craven M.B."/>
            <person name="Radune D."/>
            <person name="Vamathevan J.J."/>
            <person name="Khouri H.M."/>
            <person name="White O."/>
            <person name="Gruber T.M."/>
            <person name="Ketchum K.A."/>
            <person name="Venter J.C."/>
            <person name="Tettelin H."/>
            <person name="Bryant D.A."/>
            <person name="Fraser C.M."/>
        </authorList>
    </citation>
    <scope>NUCLEOTIDE SEQUENCE [LARGE SCALE GENOMIC DNA]</scope>
    <source>
        <strain>ATCC 49652 / DSM 12025 / NBRC 103806 / TLS</strain>
    </source>
</reference>
<dbReference type="EC" id="4.2.1.24"/>
<dbReference type="EMBL" id="AE006470">
    <property type="protein sequence ID" value="AAM72659.1"/>
    <property type="molecule type" value="Genomic_DNA"/>
</dbReference>
<dbReference type="RefSeq" id="NP_662317.1">
    <property type="nucleotide sequence ID" value="NC_002932.3"/>
</dbReference>
<dbReference type="RefSeq" id="WP_010933098.1">
    <property type="nucleotide sequence ID" value="NC_002932.3"/>
</dbReference>
<dbReference type="SMR" id="Q8KCJ0"/>
<dbReference type="STRING" id="194439.CT1431"/>
<dbReference type="EnsemblBacteria" id="AAM72659">
    <property type="protein sequence ID" value="AAM72659"/>
    <property type="gene ID" value="CT1431"/>
</dbReference>
<dbReference type="KEGG" id="cte:CT1431"/>
<dbReference type="PATRIC" id="fig|194439.7.peg.1299"/>
<dbReference type="eggNOG" id="COG0113">
    <property type="taxonomic scope" value="Bacteria"/>
</dbReference>
<dbReference type="HOGENOM" id="CLU_035731_0_0_10"/>
<dbReference type="OrthoDB" id="9805001at2"/>
<dbReference type="UniPathway" id="UPA00251">
    <property type="reaction ID" value="UER00318"/>
</dbReference>
<dbReference type="Proteomes" id="UP000001007">
    <property type="component" value="Chromosome"/>
</dbReference>
<dbReference type="GO" id="GO:0005829">
    <property type="term" value="C:cytosol"/>
    <property type="evidence" value="ECO:0007669"/>
    <property type="project" value="TreeGrafter"/>
</dbReference>
<dbReference type="GO" id="GO:0004655">
    <property type="term" value="F:porphobilinogen synthase activity"/>
    <property type="evidence" value="ECO:0007669"/>
    <property type="project" value="UniProtKB-EC"/>
</dbReference>
<dbReference type="GO" id="GO:0008270">
    <property type="term" value="F:zinc ion binding"/>
    <property type="evidence" value="ECO:0007669"/>
    <property type="project" value="TreeGrafter"/>
</dbReference>
<dbReference type="GO" id="GO:0006782">
    <property type="term" value="P:protoporphyrinogen IX biosynthetic process"/>
    <property type="evidence" value="ECO:0007669"/>
    <property type="project" value="UniProtKB-UniPathway"/>
</dbReference>
<dbReference type="CDD" id="cd04823">
    <property type="entry name" value="ALAD_PBGS_aspartate_rich"/>
    <property type="match status" value="1"/>
</dbReference>
<dbReference type="FunFam" id="3.20.20.70:FF:000019">
    <property type="entry name" value="Delta-aminolevulinic acid dehydratase"/>
    <property type="match status" value="1"/>
</dbReference>
<dbReference type="Gene3D" id="3.20.20.70">
    <property type="entry name" value="Aldolase class I"/>
    <property type="match status" value="1"/>
</dbReference>
<dbReference type="InterPro" id="IPR001731">
    <property type="entry name" value="ALAD"/>
</dbReference>
<dbReference type="InterPro" id="IPR030656">
    <property type="entry name" value="ALAD_AS"/>
</dbReference>
<dbReference type="InterPro" id="IPR013785">
    <property type="entry name" value="Aldolase_TIM"/>
</dbReference>
<dbReference type="NCBIfam" id="NF006762">
    <property type="entry name" value="PRK09283.1"/>
    <property type="match status" value="1"/>
</dbReference>
<dbReference type="PANTHER" id="PTHR11458">
    <property type="entry name" value="DELTA-AMINOLEVULINIC ACID DEHYDRATASE"/>
    <property type="match status" value="1"/>
</dbReference>
<dbReference type="PANTHER" id="PTHR11458:SF0">
    <property type="entry name" value="DELTA-AMINOLEVULINIC ACID DEHYDRATASE"/>
    <property type="match status" value="1"/>
</dbReference>
<dbReference type="Pfam" id="PF00490">
    <property type="entry name" value="ALAD"/>
    <property type="match status" value="1"/>
</dbReference>
<dbReference type="PIRSF" id="PIRSF001415">
    <property type="entry name" value="Porphbilin_synth"/>
    <property type="match status" value="1"/>
</dbReference>
<dbReference type="PRINTS" id="PR00144">
    <property type="entry name" value="DALDHYDRTASE"/>
</dbReference>
<dbReference type="SMART" id="SM01004">
    <property type="entry name" value="ALAD"/>
    <property type="match status" value="1"/>
</dbReference>
<dbReference type="SUPFAM" id="SSF51569">
    <property type="entry name" value="Aldolase"/>
    <property type="match status" value="1"/>
</dbReference>
<dbReference type="PROSITE" id="PS00169">
    <property type="entry name" value="D_ALA_DEHYDRATASE"/>
    <property type="match status" value="1"/>
</dbReference>